<evidence type="ECO:0000255" key="1">
    <source>
        <dbReference type="HAMAP-Rule" id="MF_00176"/>
    </source>
</evidence>
<comment type="function">
    <text evidence="1">Catalyzes the attachment of serine to tRNA(Ser). Is also able to aminoacylate tRNA(Sec) with serine, to form the misacylated tRNA L-seryl-tRNA(Sec), which will be further converted into selenocysteinyl-tRNA(Sec).</text>
</comment>
<comment type="catalytic activity">
    <reaction evidence="1">
        <text>tRNA(Ser) + L-serine + ATP = L-seryl-tRNA(Ser) + AMP + diphosphate + H(+)</text>
        <dbReference type="Rhea" id="RHEA:12292"/>
        <dbReference type="Rhea" id="RHEA-COMP:9669"/>
        <dbReference type="Rhea" id="RHEA-COMP:9703"/>
        <dbReference type="ChEBI" id="CHEBI:15378"/>
        <dbReference type="ChEBI" id="CHEBI:30616"/>
        <dbReference type="ChEBI" id="CHEBI:33019"/>
        <dbReference type="ChEBI" id="CHEBI:33384"/>
        <dbReference type="ChEBI" id="CHEBI:78442"/>
        <dbReference type="ChEBI" id="CHEBI:78533"/>
        <dbReference type="ChEBI" id="CHEBI:456215"/>
        <dbReference type="EC" id="6.1.1.11"/>
    </reaction>
</comment>
<comment type="catalytic activity">
    <reaction evidence="1">
        <text>tRNA(Sec) + L-serine + ATP = L-seryl-tRNA(Sec) + AMP + diphosphate + H(+)</text>
        <dbReference type="Rhea" id="RHEA:42580"/>
        <dbReference type="Rhea" id="RHEA-COMP:9742"/>
        <dbReference type="Rhea" id="RHEA-COMP:10128"/>
        <dbReference type="ChEBI" id="CHEBI:15378"/>
        <dbReference type="ChEBI" id="CHEBI:30616"/>
        <dbReference type="ChEBI" id="CHEBI:33019"/>
        <dbReference type="ChEBI" id="CHEBI:33384"/>
        <dbReference type="ChEBI" id="CHEBI:78442"/>
        <dbReference type="ChEBI" id="CHEBI:78533"/>
        <dbReference type="ChEBI" id="CHEBI:456215"/>
        <dbReference type="EC" id="6.1.1.11"/>
    </reaction>
</comment>
<comment type="pathway">
    <text evidence="1">Aminoacyl-tRNA biosynthesis; selenocysteinyl-tRNA(Sec) biosynthesis; L-seryl-tRNA(Sec) from L-serine and tRNA(Sec): step 1/1.</text>
</comment>
<comment type="subunit">
    <text evidence="1">Homodimer. The tRNA molecule binds across the dimer.</text>
</comment>
<comment type="subcellular location">
    <subcellularLocation>
        <location evidence="1">Cytoplasm</location>
    </subcellularLocation>
</comment>
<comment type="domain">
    <text evidence="1">Consists of two distinct domains, a catalytic core and a N-terminal extension that is involved in tRNA binding.</text>
</comment>
<comment type="similarity">
    <text evidence="1">Belongs to the class-II aminoacyl-tRNA synthetase family. Type-1 seryl-tRNA synthetase subfamily.</text>
</comment>
<proteinExistence type="inferred from homology"/>
<protein>
    <recommendedName>
        <fullName evidence="1">Serine--tRNA ligase</fullName>
        <ecNumber evidence="1">6.1.1.11</ecNumber>
    </recommendedName>
    <alternativeName>
        <fullName evidence="1">Seryl-tRNA synthetase</fullName>
        <shortName evidence="1">SerRS</shortName>
    </alternativeName>
    <alternativeName>
        <fullName evidence="1">Seryl-tRNA(Ser/Sec) synthetase</fullName>
    </alternativeName>
</protein>
<accession>A5UB32</accession>
<feature type="chain" id="PRO_1000019691" description="Serine--tRNA ligase">
    <location>
        <begin position="1"/>
        <end position="429"/>
    </location>
</feature>
<feature type="binding site" evidence="1">
    <location>
        <begin position="235"/>
        <end position="237"/>
    </location>
    <ligand>
        <name>L-serine</name>
        <dbReference type="ChEBI" id="CHEBI:33384"/>
    </ligand>
</feature>
<feature type="binding site" evidence="1">
    <location>
        <begin position="266"/>
        <end position="268"/>
    </location>
    <ligand>
        <name>ATP</name>
        <dbReference type="ChEBI" id="CHEBI:30616"/>
    </ligand>
</feature>
<feature type="binding site" evidence="1">
    <location>
        <position position="289"/>
    </location>
    <ligand>
        <name>L-serine</name>
        <dbReference type="ChEBI" id="CHEBI:33384"/>
    </ligand>
</feature>
<feature type="binding site" evidence="1">
    <location>
        <begin position="353"/>
        <end position="356"/>
    </location>
    <ligand>
        <name>ATP</name>
        <dbReference type="ChEBI" id="CHEBI:30616"/>
    </ligand>
</feature>
<feature type="binding site" evidence="1">
    <location>
        <position position="389"/>
    </location>
    <ligand>
        <name>L-serine</name>
        <dbReference type="ChEBI" id="CHEBI:33384"/>
    </ligand>
</feature>
<reference key="1">
    <citation type="journal article" date="2007" name="Genome Biol.">
        <title>Characterization and modeling of the Haemophilus influenzae core and supragenomes based on the complete genomic sequences of Rd and 12 clinical nontypeable strains.</title>
        <authorList>
            <person name="Hogg J.S."/>
            <person name="Hu F.Z."/>
            <person name="Janto B."/>
            <person name="Boissy R."/>
            <person name="Hayes J."/>
            <person name="Keefe R."/>
            <person name="Post J.C."/>
            <person name="Ehrlich G.D."/>
        </authorList>
    </citation>
    <scope>NUCLEOTIDE SEQUENCE [LARGE SCALE GENOMIC DNA]</scope>
    <source>
        <strain>PittEE</strain>
    </source>
</reference>
<sequence>MIDPNLLRNNLAEVAEKLKVKRNFMLDTEKLTALEDQRKNLQVTTENLQAERNARSKAIGAAKARGEDIAPLLAEMDDMGNQLTEAKAQLDAVLAEINQIALSIPNLPADEVPLGKDDTENKEILRWGTPRTFDFEVKDHITLGEEANGLDFAAGAKLAGARFAVMKGQIAKMHRALAQFMLDLHTEQHGYLETYVPYLVNHATLYGTGQLPKFGEDLFHTLALQGEQPYALIPTAEVPVTNLVRDVIIDEAKLPIKMTAHTPCFRSEAGSYGRDTRGLIRMHQFDKVEMVQIVDPDKSMEALEELTGHAEKVLQLLNLPYRKVLLCTGDMGFGSCKTYDLEVWVPAQNTYREISSCSNMWDFQARRMQARCKAKGDKKTRLVHTLNGSGLAVGRTLVAVLENYQNADGSITVPEVLRPYMGGLDVIGK</sequence>
<dbReference type="EC" id="6.1.1.11" evidence="1"/>
<dbReference type="EMBL" id="CP000671">
    <property type="protein sequence ID" value="ABQ97983.1"/>
    <property type="molecule type" value="Genomic_DNA"/>
</dbReference>
<dbReference type="SMR" id="A5UB32"/>
<dbReference type="KEGG" id="hip:CGSHiEE_02725"/>
<dbReference type="HOGENOM" id="CLU_023797_1_1_6"/>
<dbReference type="UniPathway" id="UPA00906">
    <property type="reaction ID" value="UER00895"/>
</dbReference>
<dbReference type="GO" id="GO:0005737">
    <property type="term" value="C:cytoplasm"/>
    <property type="evidence" value="ECO:0007669"/>
    <property type="project" value="UniProtKB-SubCell"/>
</dbReference>
<dbReference type="GO" id="GO:0005524">
    <property type="term" value="F:ATP binding"/>
    <property type="evidence" value="ECO:0007669"/>
    <property type="project" value="UniProtKB-UniRule"/>
</dbReference>
<dbReference type="GO" id="GO:0004828">
    <property type="term" value="F:serine-tRNA ligase activity"/>
    <property type="evidence" value="ECO:0007669"/>
    <property type="project" value="UniProtKB-UniRule"/>
</dbReference>
<dbReference type="GO" id="GO:0016260">
    <property type="term" value="P:selenocysteine biosynthetic process"/>
    <property type="evidence" value="ECO:0007669"/>
    <property type="project" value="UniProtKB-UniRule"/>
</dbReference>
<dbReference type="GO" id="GO:0006434">
    <property type="term" value="P:seryl-tRNA aminoacylation"/>
    <property type="evidence" value="ECO:0007669"/>
    <property type="project" value="UniProtKB-UniRule"/>
</dbReference>
<dbReference type="CDD" id="cd00770">
    <property type="entry name" value="SerRS_core"/>
    <property type="match status" value="1"/>
</dbReference>
<dbReference type="Gene3D" id="3.30.930.10">
    <property type="entry name" value="Bira Bifunctional Protein, Domain 2"/>
    <property type="match status" value="1"/>
</dbReference>
<dbReference type="Gene3D" id="1.10.287.40">
    <property type="entry name" value="Serine-tRNA synthetase, tRNA binding domain"/>
    <property type="match status" value="1"/>
</dbReference>
<dbReference type="HAMAP" id="MF_00176">
    <property type="entry name" value="Ser_tRNA_synth_type1"/>
    <property type="match status" value="1"/>
</dbReference>
<dbReference type="InterPro" id="IPR002314">
    <property type="entry name" value="aa-tRNA-synt_IIb"/>
</dbReference>
<dbReference type="InterPro" id="IPR006195">
    <property type="entry name" value="aa-tRNA-synth_II"/>
</dbReference>
<dbReference type="InterPro" id="IPR045864">
    <property type="entry name" value="aa-tRNA-synth_II/BPL/LPL"/>
</dbReference>
<dbReference type="InterPro" id="IPR002317">
    <property type="entry name" value="Ser-tRNA-ligase_type_1"/>
</dbReference>
<dbReference type="InterPro" id="IPR015866">
    <property type="entry name" value="Ser-tRNA-synth_1_N"/>
</dbReference>
<dbReference type="InterPro" id="IPR042103">
    <property type="entry name" value="SerRS_1_N_sf"/>
</dbReference>
<dbReference type="InterPro" id="IPR033729">
    <property type="entry name" value="SerRS_core"/>
</dbReference>
<dbReference type="InterPro" id="IPR010978">
    <property type="entry name" value="tRNA-bd_arm"/>
</dbReference>
<dbReference type="NCBIfam" id="TIGR00414">
    <property type="entry name" value="serS"/>
    <property type="match status" value="1"/>
</dbReference>
<dbReference type="PANTHER" id="PTHR43697:SF1">
    <property type="entry name" value="SERINE--TRNA LIGASE"/>
    <property type="match status" value="1"/>
</dbReference>
<dbReference type="PANTHER" id="PTHR43697">
    <property type="entry name" value="SERYL-TRNA SYNTHETASE"/>
    <property type="match status" value="1"/>
</dbReference>
<dbReference type="Pfam" id="PF02403">
    <property type="entry name" value="Seryl_tRNA_N"/>
    <property type="match status" value="1"/>
</dbReference>
<dbReference type="Pfam" id="PF00587">
    <property type="entry name" value="tRNA-synt_2b"/>
    <property type="match status" value="1"/>
</dbReference>
<dbReference type="PIRSF" id="PIRSF001529">
    <property type="entry name" value="Ser-tRNA-synth_IIa"/>
    <property type="match status" value="1"/>
</dbReference>
<dbReference type="PRINTS" id="PR00981">
    <property type="entry name" value="TRNASYNTHSER"/>
</dbReference>
<dbReference type="SUPFAM" id="SSF55681">
    <property type="entry name" value="Class II aaRS and biotin synthetases"/>
    <property type="match status" value="1"/>
</dbReference>
<dbReference type="SUPFAM" id="SSF46589">
    <property type="entry name" value="tRNA-binding arm"/>
    <property type="match status" value="1"/>
</dbReference>
<dbReference type="PROSITE" id="PS50862">
    <property type="entry name" value="AA_TRNA_LIGASE_II"/>
    <property type="match status" value="1"/>
</dbReference>
<keyword id="KW-0030">Aminoacyl-tRNA synthetase</keyword>
<keyword id="KW-0067">ATP-binding</keyword>
<keyword id="KW-0963">Cytoplasm</keyword>
<keyword id="KW-0436">Ligase</keyword>
<keyword id="KW-0547">Nucleotide-binding</keyword>
<keyword id="KW-0648">Protein biosynthesis</keyword>
<gene>
    <name evidence="1" type="primary">serS</name>
    <name type="ordered locus">CGSHiEE_02725</name>
</gene>
<name>SYS_HAEIE</name>
<organism>
    <name type="scientific">Haemophilus influenzae (strain PittEE)</name>
    <dbReference type="NCBI Taxonomy" id="374930"/>
    <lineage>
        <taxon>Bacteria</taxon>
        <taxon>Pseudomonadati</taxon>
        <taxon>Pseudomonadota</taxon>
        <taxon>Gammaproteobacteria</taxon>
        <taxon>Pasteurellales</taxon>
        <taxon>Pasteurellaceae</taxon>
        <taxon>Haemophilus</taxon>
    </lineage>
</organism>